<reference key="1">
    <citation type="journal article" date="2005" name="J. Bacteriol.">
        <title>Insights into genome plasticity and pathogenicity of the plant pathogenic Bacterium Xanthomonas campestris pv. vesicatoria revealed by the complete genome sequence.</title>
        <authorList>
            <person name="Thieme F."/>
            <person name="Koebnik R."/>
            <person name="Bekel T."/>
            <person name="Berger C."/>
            <person name="Boch J."/>
            <person name="Buettner D."/>
            <person name="Caldana C."/>
            <person name="Gaigalat L."/>
            <person name="Goesmann A."/>
            <person name="Kay S."/>
            <person name="Kirchner O."/>
            <person name="Lanz C."/>
            <person name="Linke B."/>
            <person name="McHardy A.C."/>
            <person name="Meyer F."/>
            <person name="Mittenhuber G."/>
            <person name="Nies D.H."/>
            <person name="Niesbach-Kloesgen U."/>
            <person name="Patschkowski T."/>
            <person name="Rueckert C."/>
            <person name="Rupp O."/>
            <person name="Schneiker S."/>
            <person name="Schuster S.C."/>
            <person name="Vorhoelter F.J."/>
            <person name="Weber E."/>
            <person name="Puehler A."/>
            <person name="Bonas U."/>
            <person name="Bartels D."/>
            <person name="Kaiser O."/>
        </authorList>
    </citation>
    <scope>NUCLEOTIDE SEQUENCE [LARGE SCALE GENOMIC DNA]</scope>
    <source>
        <strain>85-10</strain>
    </source>
</reference>
<feature type="chain" id="PRO_0000289461" description="Lipoprotein signal peptidase">
    <location>
        <begin position="1"/>
        <end position="172"/>
    </location>
</feature>
<feature type="transmembrane region" description="Helical" evidence="1">
    <location>
        <begin position="10"/>
        <end position="30"/>
    </location>
</feature>
<feature type="transmembrane region" description="Helical" evidence="1">
    <location>
        <begin position="68"/>
        <end position="88"/>
    </location>
</feature>
<feature type="transmembrane region" description="Helical" evidence="1">
    <location>
        <begin position="98"/>
        <end position="118"/>
    </location>
</feature>
<feature type="transmembrane region" description="Helical" evidence="1">
    <location>
        <begin position="138"/>
        <end position="158"/>
    </location>
</feature>
<feature type="active site" evidence="1">
    <location>
        <position position="124"/>
    </location>
</feature>
<feature type="active site" evidence="1">
    <location>
        <position position="142"/>
    </location>
</feature>
<keyword id="KW-0064">Aspartyl protease</keyword>
<keyword id="KW-0997">Cell inner membrane</keyword>
<keyword id="KW-1003">Cell membrane</keyword>
<keyword id="KW-0378">Hydrolase</keyword>
<keyword id="KW-0472">Membrane</keyword>
<keyword id="KW-0645">Protease</keyword>
<keyword id="KW-0812">Transmembrane</keyword>
<keyword id="KW-1133">Transmembrane helix</keyword>
<proteinExistence type="inferred from homology"/>
<organism>
    <name type="scientific">Xanthomonas euvesicatoria pv. vesicatoria (strain 85-10)</name>
    <name type="common">Xanthomonas campestris pv. vesicatoria</name>
    <dbReference type="NCBI Taxonomy" id="316273"/>
    <lineage>
        <taxon>Bacteria</taxon>
        <taxon>Pseudomonadati</taxon>
        <taxon>Pseudomonadota</taxon>
        <taxon>Gammaproteobacteria</taxon>
        <taxon>Lysobacterales</taxon>
        <taxon>Lysobacteraceae</taxon>
        <taxon>Xanthomonas</taxon>
    </lineage>
</organism>
<gene>
    <name evidence="1" type="primary">lspA</name>
    <name type="ordered locus">XCV1291</name>
</gene>
<evidence type="ECO:0000255" key="1">
    <source>
        <dbReference type="HAMAP-Rule" id="MF_00161"/>
    </source>
</evidence>
<sequence length="172" mass="18889">MSQRPNPSALIWLLLSVLVVGLDQWSKAWVLSSLPEYTPVPVIDGFWNWYRTYNTGAAFSFLSDAGGWQLWFFTALAVGISGLLAFWLSRTARGQWRSALPYALVIGGAIGNVIDRLMHGHVVDFIQWYIGSHTWPSFNIADSAIVGGAIGIAVFGLFDKSGKQEPGTGNLR</sequence>
<comment type="function">
    <text evidence="1">This protein specifically catalyzes the removal of signal peptides from prolipoproteins.</text>
</comment>
<comment type="catalytic activity">
    <reaction evidence="1">
        <text>Release of signal peptides from bacterial membrane prolipoproteins. Hydrolyzes -Xaa-Yaa-Zaa-|-(S,diacylglyceryl)Cys-, in which Xaa is hydrophobic (preferably Leu), and Yaa (Ala or Ser) and Zaa (Gly or Ala) have small, neutral side chains.</text>
        <dbReference type="EC" id="3.4.23.36"/>
    </reaction>
</comment>
<comment type="pathway">
    <text evidence="1">Protein modification; lipoprotein biosynthesis (signal peptide cleavage).</text>
</comment>
<comment type="subcellular location">
    <subcellularLocation>
        <location evidence="1">Cell inner membrane</location>
        <topology evidence="1">Multi-pass membrane protein</topology>
    </subcellularLocation>
</comment>
<comment type="similarity">
    <text evidence="1">Belongs to the peptidase A8 family.</text>
</comment>
<protein>
    <recommendedName>
        <fullName evidence="1">Lipoprotein signal peptidase</fullName>
        <ecNumber evidence="1">3.4.23.36</ecNumber>
    </recommendedName>
    <alternativeName>
        <fullName evidence="1">Prolipoprotein signal peptidase</fullName>
    </alternativeName>
    <alternativeName>
        <fullName evidence="1">Signal peptidase II</fullName>
        <shortName evidence="1">SPase II</shortName>
    </alternativeName>
</protein>
<accession>Q3BW41</accession>
<name>LSPA_XANE5</name>
<dbReference type="EC" id="3.4.23.36" evidence="1"/>
<dbReference type="EMBL" id="AM039952">
    <property type="protein sequence ID" value="CAJ22922.1"/>
    <property type="molecule type" value="Genomic_DNA"/>
</dbReference>
<dbReference type="RefSeq" id="WP_008577115.1">
    <property type="nucleotide sequence ID" value="NZ_CP017190.1"/>
</dbReference>
<dbReference type="SMR" id="Q3BW41"/>
<dbReference type="STRING" id="456327.BJD11_16160"/>
<dbReference type="GeneID" id="63990508"/>
<dbReference type="KEGG" id="xcv:XCV1291"/>
<dbReference type="eggNOG" id="COG0597">
    <property type="taxonomic scope" value="Bacteria"/>
</dbReference>
<dbReference type="HOGENOM" id="CLU_083252_4_0_6"/>
<dbReference type="UniPathway" id="UPA00665"/>
<dbReference type="Proteomes" id="UP000007069">
    <property type="component" value="Chromosome"/>
</dbReference>
<dbReference type="GO" id="GO:0005886">
    <property type="term" value="C:plasma membrane"/>
    <property type="evidence" value="ECO:0007669"/>
    <property type="project" value="UniProtKB-SubCell"/>
</dbReference>
<dbReference type="GO" id="GO:0004190">
    <property type="term" value="F:aspartic-type endopeptidase activity"/>
    <property type="evidence" value="ECO:0007669"/>
    <property type="project" value="UniProtKB-UniRule"/>
</dbReference>
<dbReference type="GO" id="GO:0006508">
    <property type="term" value="P:proteolysis"/>
    <property type="evidence" value="ECO:0007669"/>
    <property type="project" value="UniProtKB-KW"/>
</dbReference>
<dbReference type="HAMAP" id="MF_00161">
    <property type="entry name" value="LspA"/>
    <property type="match status" value="1"/>
</dbReference>
<dbReference type="InterPro" id="IPR001872">
    <property type="entry name" value="Peptidase_A8"/>
</dbReference>
<dbReference type="NCBIfam" id="TIGR00077">
    <property type="entry name" value="lspA"/>
    <property type="match status" value="1"/>
</dbReference>
<dbReference type="PANTHER" id="PTHR33695">
    <property type="entry name" value="LIPOPROTEIN SIGNAL PEPTIDASE"/>
    <property type="match status" value="1"/>
</dbReference>
<dbReference type="PANTHER" id="PTHR33695:SF1">
    <property type="entry name" value="LIPOPROTEIN SIGNAL PEPTIDASE"/>
    <property type="match status" value="1"/>
</dbReference>
<dbReference type="Pfam" id="PF01252">
    <property type="entry name" value="Peptidase_A8"/>
    <property type="match status" value="1"/>
</dbReference>
<dbReference type="PRINTS" id="PR00781">
    <property type="entry name" value="LIPOSIGPTASE"/>
</dbReference>
<dbReference type="PROSITE" id="PS00855">
    <property type="entry name" value="SPASE_II"/>
    <property type="match status" value="1"/>
</dbReference>